<evidence type="ECO:0000255" key="1">
    <source>
        <dbReference type="HAMAP-Rule" id="MF_00168"/>
    </source>
</evidence>
<gene>
    <name evidence="1" type="primary">tgt</name>
    <name type="ordered locus">Rsph17029_1495</name>
</gene>
<organism>
    <name type="scientific">Cereibacter sphaeroides (strain ATCC 17029 / ATH 2.4.9)</name>
    <name type="common">Rhodobacter sphaeroides</name>
    <dbReference type="NCBI Taxonomy" id="349101"/>
    <lineage>
        <taxon>Bacteria</taxon>
        <taxon>Pseudomonadati</taxon>
        <taxon>Pseudomonadota</taxon>
        <taxon>Alphaproteobacteria</taxon>
        <taxon>Rhodobacterales</taxon>
        <taxon>Paracoccaceae</taxon>
        <taxon>Cereibacter</taxon>
    </lineage>
</organism>
<keyword id="KW-0328">Glycosyltransferase</keyword>
<keyword id="KW-0479">Metal-binding</keyword>
<keyword id="KW-0671">Queuosine biosynthesis</keyword>
<keyword id="KW-0808">Transferase</keyword>
<keyword id="KW-0819">tRNA processing</keyword>
<keyword id="KW-0862">Zinc</keyword>
<reference key="1">
    <citation type="submission" date="2007-02" db="EMBL/GenBank/DDBJ databases">
        <title>Complete sequence of chromosome 1 of Rhodobacter sphaeroides ATCC 17029.</title>
        <authorList>
            <person name="Copeland A."/>
            <person name="Lucas S."/>
            <person name="Lapidus A."/>
            <person name="Barry K."/>
            <person name="Detter J.C."/>
            <person name="Glavina del Rio T."/>
            <person name="Hammon N."/>
            <person name="Israni S."/>
            <person name="Dalin E."/>
            <person name="Tice H."/>
            <person name="Pitluck S."/>
            <person name="Kiss H."/>
            <person name="Brettin T."/>
            <person name="Bruce D."/>
            <person name="Han C."/>
            <person name="Tapia R."/>
            <person name="Gilna P."/>
            <person name="Schmutz J."/>
            <person name="Larimer F."/>
            <person name="Land M."/>
            <person name="Hauser L."/>
            <person name="Kyrpides N."/>
            <person name="Mikhailova N."/>
            <person name="Richardson P."/>
            <person name="Mackenzie C."/>
            <person name="Choudhary M."/>
            <person name="Donohue T.J."/>
            <person name="Kaplan S."/>
        </authorList>
    </citation>
    <scope>NUCLEOTIDE SEQUENCE [LARGE SCALE GENOMIC DNA]</scope>
    <source>
        <strain>ATCC 17029 / ATH 2.4.9</strain>
    </source>
</reference>
<comment type="function">
    <text evidence="1">Catalyzes the base-exchange of a guanine (G) residue with the queuine precursor 7-aminomethyl-7-deazaguanine (PreQ1) at position 34 (anticodon wobble position) in tRNAs with GU(N) anticodons (tRNA-Asp, -Asn, -His and -Tyr). Catalysis occurs through a double-displacement mechanism. The nucleophile active site attacks the C1' of nucleotide 34 to detach the guanine base from the RNA, forming a covalent enzyme-RNA intermediate. The proton acceptor active site deprotonates the incoming PreQ1, allowing a nucleophilic attack on the C1' of the ribose to form the product. After dissociation, two additional enzymatic reactions on the tRNA convert PreQ1 to queuine (Q), resulting in the hypermodified nucleoside queuosine (7-(((4,5-cis-dihydroxy-2-cyclopenten-1-yl)amino)methyl)-7-deazaguanosine).</text>
</comment>
<comment type="catalytic activity">
    <reaction evidence="1">
        <text>7-aminomethyl-7-carbaguanine + guanosine(34) in tRNA = 7-aminomethyl-7-carbaguanosine(34) in tRNA + guanine</text>
        <dbReference type="Rhea" id="RHEA:24104"/>
        <dbReference type="Rhea" id="RHEA-COMP:10341"/>
        <dbReference type="Rhea" id="RHEA-COMP:10342"/>
        <dbReference type="ChEBI" id="CHEBI:16235"/>
        <dbReference type="ChEBI" id="CHEBI:58703"/>
        <dbReference type="ChEBI" id="CHEBI:74269"/>
        <dbReference type="ChEBI" id="CHEBI:82833"/>
        <dbReference type="EC" id="2.4.2.29"/>
    </reaction>
</comment>
<comment type="cofactor">
    <cofactor evidence="1">
        <name>Zn(2+)</name>
        <dbReference type="ChEBI" id="CHEBI:29105"/>
    </cofactor>
    <text evidence="1">Binds 1 zinc ion per subunit.</text>
</comment>
<comment type="pathway">
    <text evidence="1">tRNA modification; tRNA-queuosine biosynthesis.</text>
</comment>
<comment type="subunit">
    <text evidence="1">Homodimer. Within each dimer, one monomer is responsible for RNA recognition and catalysis, while the other monomer binds to the replacement base PreQ1.</text>
</comment>
<comment type="similarity">
    <text evidence="1">Belongs to the queuine tRNA-ribosyltransferase family.</text>
</comment>
<proteinExistence type="inferred from homology"/>
<feature type="chain" id="PRO_1000016834" description="Queuine tRNA-ribosyltransferase">
    <location>
        <begin position="1"/>
        <end position="376"/>
    </location>
</feature>
<feature type="region of interest" description="RNA binding" evidence="1">
    <location>
        <begin position="248"/>
        <end position="254"/>
    </location>
</feature>
<feature type="active site" description="Proton acceptor" evidence="1">
    <location>
        <position position="93"/>
    </location>
</feature>
<feature type="active site" description="Nucleophile" evidence="1">
    <location>
        <position position="267"/>
    </location>
</feature>
<feature type="binding site" evidence="1">
    <location>
        <begin position="93"/>
        <end position="97"/>
    </location>
    <ligand>
        <name>substrate</name>
    </ligand>
</feature>
<feature type="binding site" evidence="1">
    <location>
        <position position="147"/>
    </location>
    <ligand>
        <name>substrate</name>
    </ligand>
</feature>
<feature type="binding site" evidence="1">
    <location>
        <position position="190"/>
    </location>
    <ligand>
        <name>substrate</name>
    </ligand>
</feature>
<feature type="binding site" evidence="1">
    <location>
        <position position="217"/>
    </location>
    <ligand>
        <name>substrate</name>
    </ligand>
</feature>
<feature type="binding site" evidence="1">
    <location>
        <position position="305"/>
    </location>
    <ligand>
        <name>Zn(2+)</name>
        <dbReference type="ChEBI" id="CHEBI:29105"/>
    </ligand>
</feature>
<feature type="binding site" evidence="1">
    <location>
        <position position="307"/>
    </location>
    <ligand>
        <name>Zn(2+)</name>
        <dbReference type="ChEBI" id="CHEBI:29105"/>
    </ligand>
</feature>
<feature type="binding site" evidence="1">
    <location>
        <position position="310"/>
    </location>
    <ligand>
        <name>Zn(2+)</name>
        <dbReference type="ChEBI" id="CHEBI:29105"/>
    </ligand>
</feature>
<feature type="binding site" evidence="1">
    <location>
        <position position="336"/>
    </location>
    <ligand>
        <name>Zn(2+)</name>
        <dbReference type="ChEBI" id="CHEBI:29105"/>
    </ligand>
</feature>
<name>TGT_CERS1</name>
<accession>A3PJT9</accession>
<protein>
    <recommendedName>
        <fullName evidence="1">Queuine tRNA-ribosyltransferase</fullName>
        <ecNumber evidence="1">2.4.2.29</ecNumber>
    </recommendedName>
    <alternativeName>
        <fullName evidence="1">Guanine insertion enzyme</fullName>
    </alternativeName>
    <alternativeName>
        <fullName evidence="1">tRNA-guanine transglycosylase</fullName>
    </alternativeName>
</protein>
<sequence>MTQRFSFELTATDGRARTGVISTPRGEIRTPAFMPVGTAGTVKAMLPENVRATGADILLGNTYHLMLRPTAERVARLGGLHRFMNWDRPILTDSGGFQVMSLADLRKLSEEGVTFRSHIDGSKHHLSPERSMEIQRLLGSDIVMAFDECPALPATEEAVAQSMRLSMRWARRSREAFGDRPGHALFGIMQGGVTRDLREESAAALREIGFEGYAIGGLAVGEGQEAMFGVLDYAPGFLPEDRPRYLMGVGKPDDIVGAVERGVDMMDCVLPSRSGRTGQAWTRRGQVNIKNARHMDDPRPLDEACSCPACRSYSRAYLHHVFRAQEIIASMLLTWHNLHYYQELMQGLRTAIAAGRLGEFVAAFHAARAEGDIEPL</sequence>
<dbReference type="EC" id="2.4.2.29" evidence="1"/>
<dbReference type="EMBL" id="CP000577">
    <property type="protein sequence ID" value="ABN76605.1"/>
    <property type="molecule type" value="Genomic_DNA"/>
</dbReference>
<dbReference type="RefSeq" id="WP_011841055.1">
    <property type="nucleotide sequence ID" value="NC_009049.1"/>
</dbReference>
<dbReference type="SMR" id="A3PJT9"/>
<dbReference type="KEGG" id="rsh:Rsph17029_1495"/>
<dbReference type="HOGENOM" id="CLU_022060_0_1_5"/>
<dbReference type="UniPathway" id="UPA00392"/>
<dbReference type="GO" id="GO:0005829">
    <property type="term" value="C:cytosol"/>
    <property type="evidence" value="ECO:0007669"/>
    <property type="project" value="TreeGrafter"/>
</dbReference>
<dbReference type="GO" id="GO:0046872">
    <property type="term" value="F:metal ion binding"/>
    <property type="evidence" value="ECO:0007669"/>
    <property type="project" value="UniProtKB-KW"/>
</dbReference>
<dbReference type="GO" id="GO:0008479">
    <property type="term" value="F:tRNA-guanosine(34) queuine transglycosylase activity"/>
    <property type="evidence" value="ECO:0007669"/>
    <property type="project" value="UniProtKB-UniRule"/>
</dbReference>
<dbReference type="GO" id="GO:0008616">
    <property type="term" value="P:queuosine biosynthetic process"/>
    <property type="evidence" value="ECO:0007669"/>
    <property type="project" value="UniProtKB-UniRule"/>
</dbReference>
<dbReference type="GO" id="GO:0002099">
    <property type="term" value="P:tRNA wobble guanine modification"/>
    <property type="evidence" value="ECO:0007669"/>
    <property type="project" value="TreeGrafter"/>
</dbReference>
<dbReference type="GO" id="GO:0101030">
    <property type="term" value="P:tRNA-guanine transglycosylation"/>
    <property type="evidence" value="ECO:0007669"/>
    <property type="project" value="InterPro"/>
</dbReference>
<dbReference type="FunFam" id="3.20.20.105:FF:000001">
    <property type="entry name" value="Queuine tRNA-ribosyltransferase"/>
    <property type="match status" value="1"/>
</dbReference>
<dbReference type="Gene3D" id="3.20.20.105">
    <property type="entry name" value="Queuine tRNA-ribosyltransferase-like"/>
    <property type="match status" value="1"/>
</dbReference>
<dbReference type="HAMAP" id="MF_00168">
    <property type="entry name" value="Q_tRNA_Tgt"/>
    <property type="match status" value="1"/>
</dbReference>
<dbReference type="InterPro" id="IPR050076">
    <property type="entry name" value="ArchSynthase1/Queuine_TRR"/>
</dbReference>
<dbReference type="InterPro" id="IPR004803">
    <property type="entry name" value="TGT"/>
</dbReference>
<dbReference type="InterPro" id="IPR036511">
    <property type="entry name" value="TGT-like_sf"/>
</dbReference>
<dbReference type="InterPro" id="IPR002616">
    <property type="entry name" value="tRNA_ribo_trans-like"/>
</dbReference>
<dbReference type="NCBIfam" id="TIGR00430">
    <property type="entry name" value="Q_tRNA_tgt"/>
    <property type="match status" value="1"/>
</dbReference>
<dbReference type="NCBIfam" id="TIGR00449">
    <property type="entry name" value="tgt_general"/>
    <property type="match status" value="1"/>
</dbReference>
<dbReference type="PANTHER" id="PTHR46499">
    <property type="entry name" value="QUEUINE TRNA-RIBOSYLTRANSFERASE"/>
    <property type="match status" value="1"/>
</dbReference>
<dbReference type="PANTHER" id="PTHR46499:SF1">
    <property type="entry name" value="QUEUINE TRNA-RIBOSYLTRANSFERASE"/>
    <property type="match status" value="1"/>
</dbReference>
<dbReference type="Pfam" id="PF01702">
    <property type="entry name" value="TGT"/>
    <property type="match status" value="1"/>
</dbReference>
<dbReference type="SUPFAM" id="SSF51713">
    <property type="entry name" value="tRNA-guanine transglycosylase"/>
    <property type="match status" value="1"/>
</dbReference>